<organism>
    <name type="scientific">Rattus norvegicus</name>
    <name type="common">Rat</name>
    <dbReference type="NCBI Taxonomy" id="10116"/>
    <lineage>
        <taxon>Eukaryota</taxon>
        <taxon>Metazoa</taxon>
        <taxon>Chordata</taxon>
        <taxon>Craniata</taxon>
        <taxon>Vertebrata</taxon>
        <taxon>Euteleostomi</taxon>
        <taxon>Mammalia</taxon>
        <taxon>Eutheria</taxon>
        <taxon>Euarchontoglires</taxon>
        <taxon>Glires</taxon>
        <taxon>Rodentia</taxon>
        <taxon>Myomorpha</taxon>
        <taxon>Muroidea</taxon>
        <taxon>Muridae</taxon>
        <taxon>Murinae</taxon>
        <taxon>Rattus</taxon>
    </lineage>
</organism>
<reference key="1">
    <citation type="journal article" date="2004" name="Immunogenetics">
        <title>Identification of lectin-like receptors expressed by antigen presenting cells and neutrophils and their mapping to a novel gene complex.</title>
        <authorList>
            <person name="Flornes L.M."/>
            <person name="Bryceson Y.T."/>
            <person name="Spurkland A."/>
            <person name="Lorentzen J.C."/>
            <person name="Dissen E."/>
            <person name="Fossum S."/>
        </authorList>
    </citation>
    <scope>NUCLEOTIDE SEQUENCE [MRNA]</scope>
    <scope>TISSUE SPECIFICITY</scope>
    <source>
        <strain>PVG</strain>
    </source>
</reference>
<proteinExistence type="evidence at transcript level"/>
<feature type="chain" id="PRO_0000046614" description="C-type lectin domain family 4 member A">
    <location>
        <begin position="1"/>
        <end position="240"/>
    </location>
</feature>
<feature type="topological domain" description="Cytoplasmic" evidence="2">
    <location>
        <begin position="1"/>
        <end position="48"/>
    </location>
</feature>
<feature type="transmembrane region" description="Helical; Signal-anchor for type II membrane protein" evidence="2">
    <location>
        <begin position="49"/>
        <end position="69"/>
    </location>
</feature>
<feature type="topological domain" description="Extracellular" evidence="2">
    <location>
        <begin position="70"/>
        <end position="240"/>
    </location>
</feature>
<feature type="domain" description="C-type lectin" evidence="3">
    <location>
        <begin position="129"/>
        <end position="235"/>
    </location>
</feature>
<feature type="region of interest" description="Disordered" evidence="4">
    <location>
        <begin position="18"/>
        <end position="38"/>
    </location>
</feature>
<feature type="short sequence motif" description="ITIM motif">
    <location>
        <begin position="5"/>
        <end position="10"/>
    </location>
</feature>
<feature type="binding site" evidence="1">
    <location>
        <position position="149"/>
    </location>
    <ligand>
        <name>Ca(2+)</name>
        <dbReference type="ChEBI" id="CHEBI:29108"/>
        <label>1</label>
    </ligand>
</feature>
<feature type="binding site" evidence="1">
    <location>
        <position position="155"/>
    </location>
    <ligand>
        <name>Ca(2+)</name>
        <dbReference type="ChEBI" id="CHEBI:29108"/>
        <label>1</label>
    </ligand>
</feature>
<feature type="binding site" evidence="1">
    <location>
        <begin position="200"/>
        <end position="202"/>
    </location>
    <ligand>
        <name>alpha-D-mannopyranose</name>
        <dbReference type="ChEBI" id="CHEBI:28729"/>
    </ligand>
</feature>
<feature type="binding site" evidence="1">
    <location>
        <position position="200"/>
    </location>
    <ligand>
        <name>Ca(2+)</name>
        <dbReference type="ChEBI" id="CHEBI:29108"/>
        <label>2</label>
    </ligand>
</feature>
<feature type="binding site" evidence="1">
    <location>
        <position position="202"/>
    </location>
    <ligand>
        <name>Ca(2+)</name>
        <dbReference type="ChEBI" id="CHEBI:29108"/>
        <label>2</label>
    </ligand>
</feature>
<feature type="binding site" evidence="1">
    <location>
        <position position="206"/>
    </location>
    <ligand>
        <name>alpha-D-mannopyranose</name>
        <dbReference type="ChEBI" id="CHEBI:28729"/>
    </ligand>
</feature>
<feature type="binding site" evidence="1">
    <location>
        <position position="206"/>
    </location>
    <ligand>
        <name>Ca(2+)</name>
        <dbReference type="ChEBI" id="CHEBI:29108"/>
        <label>2</label>
    </ligand>
</feature>
<feature type="binding site" evidence="1">
    <location>
        <begin position="211"/>
        <end position="213"/>
    </location>
    <ligand>
        <name>N-acetyl-D-glucosamine</name>
        <dbReference type="ChEBI" id="CHEBI:506227"/>
    </ligand>
</feature>
<feature type="binding site" evidence="1">
    <location>
        <position position="221"/>
    </location>
    <ligand>
        <name>Ca(2+)</name>
        <dbReference type="ChEBI" id="CHEBI:29108"/>
        <label>2</label>
    </ligand>
</feature>
<feature type="binding site" evidence="1">
    <location>
        <position position="222"/>
    </location>
    <ligand>
        <name>Ca(2+)</name>
        <dbReference type="ChEBI" id="CHEBI:29108"/>
        <label>2</label>
    </ligand>
</feature>
<feature type="glycosylation site" description="N-linked (GlcNAc...) asparagine" evidence="2">
    <location>
        <position position="190"/>
    </location>
</feature>
<feature type="disulfide bond" evidence="3">
    <location>
        <begin position="107"/>
        <end position="118"/>
    </location>
</feature>
<feature type="disulfide bond" evidence="3">
    <location>
        <begin position="140"/>
        <end position="233"/>
    </location>
</feature>
<feature type="disulfide bond" evidence="3">
    <location>
        <begin position="208"/>
        <end position="225"/>
    </location>
</feature>
<name>CLC4A_RAT</name>
<keyword id="KW-1064">Adaptive immunity</keyword>
<keyword id="KW-0106">Calcium</keyword>
<keyword id="KW-1003">Cell membrane</keyword>
<keyword id="KW-1015">Disulfide bond</keyword>
<keyword id="KW-0325">Glycoprotein</keyword>
<keyword id="KW-0391">Immunity</keyword>
<keyword id="KW-0399">Innate immunity</keyword>
<keyword id="KW-0430">Lectin</keyword>
<keyword id="KW-0472">Membrane</keyword>
<keyword id="KW-0479">Metal-binding</keyword>
<keyword id="KW-1185">Reference proteome</keyword>
<keyword id="KW-0735">Signal-anchor</keyword>
<keyword id="KW-0812">Transmembrane</keyword>
<keyword id="KW-1133">Transmembrane helix</keyword>
<comment type="function">
    <text evidence="1">C-type lectin receptor that binds carbohydrates mannose and fucose but also weakly interacts with N-acetylglucosamine (GlcNAc) in a Ca(2+)-dependent manner. Involved in regulating immune reactivity. Once triggered by antigen, it is internalized by clathrin-dependent endocytosis and delivers its antigenic cargo into the antigen presentation pathway resulting in cross-priming of CD8(+) T cells. This cross-presentation and cross-priming are enhanced by TLR7 and TLR8 agonists with increased expansion of the CD8(+) T cells, high production of IFNG and TNF with reduced levels of IL4, IL5 and IL13. In plasmacytoid dendritic cells, inhibits TLR9-mediated IFNA and TNF production. May be involved via its ITIM motif (immunoreceptor tyrosine-based inhibitory motifs) in the inhibition of B-cell-receptor-mediated calcium mobilization and protein tyrosine phosphorylation.</text>
</comment>
<comment type="subunit">
    <text evidence="1">May interact with PTPN6 via its ITIM site.</text>
</comment>
<comment type="subcellular location">
    <subcellularLocation>
        <location evidence="6">Cell membrane</location>
        <topology evidence="6">Single-pass type II membrane protein</topology>
        <orientation evidence="1">Extracellular side</orientation>
    </subcellularLocation>
</comment>
<comment type="tissue specificity">
    <text evidence="5">Expressed by myeloid cells (dendritic cells, macrophages, and neutrophils) and B-cells.</text>
</comment>
<comment type="domain">
    <text evidence="1">Contains 1 copy of a cytoplasmic motif that is referred to as the immunoreceptor tyrosine-based inhibitor motif (ITIM). This motif is involved in modulation of cellular responses. The phosphorylated ITIM motif can bind the SH2 domain of several SH2-containing phosphatases.</text>
</comment>
<sequence length="240" mass="27404">MASEITYAEVRIKNESNSSVTYSGSPAAPREKPTRHLSKPGSLLVPFTSLMVLLLLLAITFLVAFIIYFQKYSQFLEEKKAIKGITHKELNCIKNVLLMEEKSWSCCPKNWKPFGSHCYWVTKHTSTYSKASWSESEKNCFSMGAHLLVIHSKEEQDFITGILNRDAAYFIGLWDSGHRQWQWVSQTPYNASATFWHKGEPSSDDEKCVIINHLNSGWGWNDIPCSGKQQSVCQMKKIQL</sequence>
<dbReference type="EMBL" id="AY363176">
    <property type="protein sequence ID" value="AAR18686.1"/>
    <property type="molecule type" value="mRNA"/>
</dbReference>
<dbReference type="SMR" id="Q67EQ0"/>
<dbReference type="FunCoup" id="Q67EQ0">
    <property type="interactions" value="21"/>
</dbReference>
<dbReference type="STRING" id="10116.ENSRNOP00000037071"/>
<dbReference type="GlyCosmos" id="Q67EQ0">
    <property type="glycosylation" value="1 site, No reported glycans"/>
</dbReference>
<dbReference type="GlyGen" id="Q67EQ0">
    <property type="glycosylation" value="1 site"/>
</dbReference>
<dbReference type="PhosphoSitePlus" id="Q67EQ0"/>
<dbReference type="PaxDb" id="10116-ENSRNOP00000037071"/>
<dbReference type="UCSC" id="RGD:1359662">
    <property type="organism name" value="rat"/>
</dbReference>
<dbReference type="AGR" id="RGD:1359662"/>
<dbReference type="RGD" id="1359662">
    <property type="gene designation" value="Clec4a"/>
</dbReference>
<dbReference type="eggNOG" id="KOG4297">
    <property type="taxonomic scope" value="Eukaryota"/>
</dbReference>
<dbReference type="InParanoid" id="Q67EQ0"/>
<dbReference type="PhylomeDB" id="Q67EQ0"/>
<dbReference type="PRO" id="PR:Q67EQ0"/>
<dbReference type="Proteomes" id="UP000002494">
    <property type="component" value="Unplaced"/>
</dbReference>
<dbReference type="GO" id="GO:0009897">
    <property type="term" value="C:external side of plasma membrane"/>
    <property type="evidence" value="ECO:0000318"/>
    <property type="project" value="GO_Central"/>
</dbReference>
<dbReference type="GO" id="GO:0005509">
    <property type="term" value="F:calcium ion binding"/>
    <property type="evidence" value="ECO:0000250"/>
    <property type="project" value="UniProtKB"/>
</dbReference>
<dbReference type="GO" id="GO:0030246">
    <property type="term" value="F:carbohydrate binding"/>
    <property type="evidence" value="ECO:0000250"/>
    <property type="project" value="UniProtKB"/>
</dbReference>
<dbReference type="GO" id="GO:0005537">
    <property type="term" value="F:D-mannose binding"/>
    <property type="evidence" value="ECO:0000250"/>
    <property type="project" value="UniProtKB"/>
</dbReference>
<dbReference type="GO" id="GO:0038187">
    <property type="term" value="F:pattern recognition receptor activity"/>
    <property type="evidence" value="ECO:0000266"/>
    <property type="project" value="RGD"/>
</dbReference>
<dbReference type="GO" id="GO:0002250">
    <property type="term" value="P:adaptive immune response"/>
    <property type="evidence" value="ECO:0007669"/>
    <property type="project" value="UniProtKB-KW"/>
</dbReference>
<dbReference type="GO" id="GO:0061760">
    <property type="term" value="P:antifungal innate immune response"/>
    <property type="evidence" value="ECO:0000266"/>
    <property type="project" value="RGD"/>
</dbReference>
<dbReference type="GO" id="GO:0042590">
    <property type="term" value="P:antigen processing and presentation of exogenous peptide antigen via MHC class I"/>
    <property type="evidence" value="ECO:0000250"/>
    <property type="project" value="UniProtKB"/>
</dbReference>
<dbReference type="GO" id="GO:0036037">
    <property type="term" value="P:CD8-positive, alpha-beta T cell activation"/>
    <property type="evidence" value="ECO:0000250"/>
    <property type="project" value="UniProtKB"/>
</dbReference>
<dbReference type="GO" id="GO:0050832">
    <property type="term" value="P:defense response to fungus"/>
    <property type="evidence" value="ECO:0000266"/>
    <property type="project" value="RGD"/>
</dbReference>
<dbReference type="GO" id="GO:0001879">
    <property type="term" value="P:detection of yeast"/>
    <property type="evidence" value="ECO:0000266"/>
    <property type="project" value="RGD"/>
</dbReference>
<dbReference type="GO" id="GO:0045087">
    <property type="term" value="P:innate immune response"/>
    <property type="evidence" value="ECO:0000266"/>
    <property type="project" value="RGD"/>
</dbReference>
<dbReference type="GO" id="GO:0001818">
    <property type="term" value="P:negative regulation of cytokine production"/>
    <property type="evidence" value="ECO:0000250"/>
    <property type="project" value="UniProtKB"/>
</dbReference>
<dbReference type="GO" id="GO:0032720">
    <property type="term" value="P:negative regulation of tumor necrosis factor production"/>
    <property type="evidence" value="ECO:0000250"/>
    <property type="project" value="UniProtKB"/>
</dbReference>
<dbReference type="GO" id="GO:0002470">
    <property type="term" value="P:plasmacytoid dendritic cell antigen processing and presentation"/>
    <property type="evidence" value="ECO:0000250"/>
    <property type="project" value="UniProtKB"/>
</dbReference>
<dbReference type="GO" id="GO:0043123">
    <property type="term" value="P:positive regulation of canonical NF-kappaB signal transduction"/>
    <property type="evidence" value="ECO:0000266"/>
    <property type="project" value="RGD"/>
</dbReference>
<dbReference type="GO" id="GO:0001819">
    <property type="term" value="P:positive regulation of cytokine production"/>
    <property type="evidence" value="ECO:0000266"/>
    <property type="project" value="RGD"/>
</dbReference>
<dbReference type="GO" id="GO:1902533">
    <property type="term" value="P:positive regulation of intracellular signal transduction"/>
    <property type="evidence" value="ECO:0000266"/>
    <property type="project" value="RGD"/>
</dbReference>
<dbReference type="GO" id="GO:2000318">
    <property type="term" value="P:positive regulation of T-helper 17 type immune response"/>
    <property type="evidence" value="ECO:0000266"/>
    <property type="project" value="RGD"/>
</dbReference>
<dbReference type="GO" id="GO:0001878">
    <property type="term" value="P:response to yeast"/>
    <property type="evidence" value="ECO:0000266"/>
    <property type="project" value="RGD"/>
</dbReference>
<dbReference type="GO" id="GO:0002223">
    <property type="term" value="P:stimulatory C-type lectin receptor signaling pathway"/>
    <property type="evidence" value="ECO:0000266"/>
    <property type="project" value="RGD"/>
</dbReference>
<dbReference type="CDD" id="cd03590">
    <property type="entry name" value="CLECT_DC-SIGN_like"/>
    <property type="match status" value="1"/>
</dbReference>
<dbReference type="FunFam" id="3.10.100.10:FF:000024">
    <property type="entry name" value="C-type lectin domain family 4 member A"/>
    <property type="match status" value="1"/>
</dbReference>
<dbReference type="Gene3D" id="3.10.100.10">
    <property type="entry name" value="Mannose-Binding Protein A, subunit A"/>
    <property type="match status" value="1"/>
</dbReference>
<dbReference type="InterPro" id="IPR001304">
    <property type="entry name" value="C-type_lectin-like"/>
</dbReference>
<dbReference type="InterPro" id="IPR016186">
    <property type="entry name" value="C-type_lectin-like/link_sf"/>
</dbReference>
<dbReference type="InterPro" id="IPR050111">
    <property type="entry name" value="C-type_lectin/snaclec_domain"/>
</dbReference>
<dbReference type="InterPro" id="IPR018378">
    <property type="entry name" value="C-type_lectin_CS"/>
</dbReference>
<dbReference type="InterPro" id="IPR033989">
    <property type="entry name" value="CD209-like_CTLD"/>
</dbReference>
<dbReference type="InterPro" id="IPR016187">
    <property type="entry name" value="CTDL_fold"/>
</dbReference>
<dbReference type="PANTHER" id="PTHR22803">
    <property type="entry name" value="MANNOSE, PHOSPHOLIPASE, LECTIN RECEPTOR RELATED"/>
    <property type="match status" value="1"/>
</dbReference>
<dbReference type="Pfam" id="PF00059">
    <property type="entry name" value="Lectin_C"/>
    <property type="match status" value="1"/>
</dbReference>
<dbReference type="SMART" id="SM00034">
    <property type="entry name" value="CLECT"/>
    <property type="match status" value="1"/>
</dbReference>
<dbReference type="SUPFAM" id="SSF56436">
    <property type="entry name" value="C-type lectin-like"/>
    <property type="match status" value="1"/>
</dbReference>
<dbReference type="PROSITE" id="PS00615">
    <property type="entry name" value="C_TYPE_LECTIN_1"/>
    <property type="match status" value="1"/>
</dbReference>
<dbReference type="PROSITE" id="PS50041">
    <property type="entry name" value="C_TYPE_LECTIN_2"/>
    <property type="match status" value="1"/>
</dbReference>
<gene>
    <name type="primary">Clec4a</name>
    <name type="synonym">Clecsf6</name>
    <name type="synonym">Dcir</name>
</gene>
<protein>
    <recommendedName>
        <fullName>C-type lectin domain family 4 member A</fullName>
    </recommendedName>
    <alternativeName>
        <fullName>C-type lectin superfamily member 6</fullName>
    </alternativeName>
    <alternativeName>
        <fullName>Dendritic cell inhibitory receptor</fullName>
    </alternativeName>
    <cdAntigenName>CD367</cdAntigenName>
</protein>
<accession>Q67EQ0</accession>
<evidence type="ECO:0000250" key="1">
    <source>
        <dbReference type="UniProtKB" id="Q9UMR7"/>
    </source>
</evidence>
<evidence type="ECO:0000255" key="2"/>
<evidence type="ECO:0000255" key="3">
    <source>
        <dbReference type="PROSITE-ProRule" id="PRU00040"/>
    </source>
</evidence>
<evidence type="ECO:0000256" key="4">
    <source>
        <dbReference type="SAM" id="MobiDB-lite"/>
    </source>
</evidence>
<evidence type="ECO:0000269" key="5">
    <source>
    </source>
</evidence>
<evidence type="ECO:0000305" key="6"/>